<keyword id="KW-0238">DNA-binding</keyword>
<keyword id="KW-0255">Endonuclease</keyword>
<keyword id="KW-0378">Hydrolase</keyword>
<keyword id="KW-0479">Metal-binding</keyword>
<keyword id="KW-0540">Nuclease</keyword>
<keyword id="KW-0694">RNA-binding</keyword>
<keyword id="KW-0862">Zinc</keyword>
<dbReference type="EC" id="3.1.-.-" evidence="2"/>
<dbReference type="EMBL" id="BBCE01000017">
    <property type="status" value="NOT_ANNOTATED_CDS"/>
    <property type="molecule type" value="Genomic_DNA"/>
</dbReference>
<dbReference type="RefSeq" id="WP_054696859.1">
    <property type="nucleotide sequence ID" value="NZ_BBCE01000017.1"/>
</dbReference>
<dbReference type="SMR" id="P0DW62"/>
<dbReference type="OrthoDB" id="4278026at2"/>
<dbReference type="GO" id="GO:0003677">
    <property type="term" value="F:DNA binding"/>
    <property type="evidence" value="ECO:0007669"/>
    <property type="project" value="UniProtKB-KW"/>
</dbReference>
<dbReference type="GO" id="GO:0004519">
    <property type="term" value="F:endonuclease activity"/>
    <property type="evidence" value="ECO:0007669"/>
    <property type="project" value="UniProtKB-KW"/>
</dbReference>
<dbReference type="GO" id="GO:0046872">
    <property type="term" value="F:metal ion binding"/>
    <property type="evidence" value="ECO:0007669"/>
    <property type="project" value="UniProtKB-KW"/>
</dbReference>
<dbReference type="GO" id="GO:0003723">
    <property type="term" value="F:RNA binding"/>
    <property type="evidence" value="ECO:0007669"/>
    <property type="project" value="UniProtKB-KW"/>
</dbReference>
<dbReference type="InterPro" id="IPR010095">
    <property type="entry name" value="Cas12f1-like_TNB"/>
</dbReference>
<dbReference type="NCBIfam" id="NF040570">
    <property type="entry name" value="guided_TnpB"/>
    <property type="match status" value="1"/>
</dbReference>
<dbReference type="NCBIfam" id="TIGR01766">
    <property type="entry name" value="IS200/IS605 family accessory protein TnpB-like domain"/>
    <property type="match status" value="1"/>
</dbReference>
<dbReference type="Pfam" id="PF07282">
    <property type="entry name" value="Cas12f1-like_TNB"/>
    <property type="match status" value="1"/>
</dbReference>
<evidence type="ECO:0000250" key="1">
    <source>
        <dbReference type="UniProtKB" id="A0A482D308"/>
    </source>
</evidence>
<evidence type="ECO:0000269" key="2">
    <source>
    </source>
</evidence>
<evidence type="ECO:0000303" key="3">
    <source>
    </source>
</evidence>
<evidence type="ECO:0000305" key="4">
    <source>
    </source>
</evidence>
<protein>
    <recommendedName>
        <fullName evidence="3">CRISPR-associated endodeoxyribonuclease Cas12f1</fullName>
        <shortName evidence="3">SpCas12f1</shortName>
        <ecNumber evidence="2">3.1.-.-</ecNumber>
    </recommendedName>
    <alternativeName>
        <fullName evidence="3">CRISPR-associated endonuclease C2c10</fullName>
    </alternativeName>
</protein>
<reference key="1">
    <citation type="submission" date="2014-06" db="EMBL/GenBank/DDBJ databases">
        <title>NBRP: Genome information of microbial organism related human and environment.</title>
        <authorList>
            <person name="Hattori M."/>
            <person name="Oshima K."/>
            <person name="Kuroyanagi H."/>
            <person name="Suda W."/>
            <person name="Sakamoto M."/>
            <person name="Iino T."/>
            <person name="Kitahara M."/>
            <person name="Oshida Y."/>
            <person name="Iida T."/>
            <person name="Kudo T."/>
            <person name="Itoh T."/>
            <person name="Kitamura K."/>
            <person name="Ohkuma M."/>
        </authorList>
    </citation>
    <scope>NUCLEOTIDE SEQUENCE [LARGE SCALE GENOMIC DNA]</scope>
    <source>
        <strain>DSM 18709 / JCM 14374 / NBRC 102128 / MPA</strain>
    </source>
</reference>
<reference key="2">
    <citation type="journal article" date="2020" name="Nucleic Acids Res.">
        <title>PAM recognition by miniature CRISPR-Cas12f nucleases triggers programmable double-stranded DNA target cleavage.</title>
        <authorList>
            <person name="Karvelis T."/>
            <person name="Bigelyte G."/>
            <person name="Young J.K."/>
            <person name="Hou Z."/>
            <person name="Zedaveinyte R."/>
            <person name="Budre K."/>
            <person name="Paulraj S."/>
            <person name="Djukanovic V."/>
            <person name="Gasior S."/>
            <person name="Silanskas A."/>
            <person name="Venclovas C."/>
            <person name="Siksnys V."/>
        </authorList>
    </citation>
    <scope>FUNCTION</scope>
    <scope>CATALYTIC ACTIVITY</scope>
    <scope>BIOTECHNOLOGY</scope>
    <scope>RNA-BINDING</scope>
    <source>
        <strain>DSM 18709 / JCM 14374 / NBRC 102128 / MPA</strain>
    </source>
</reference>
<reference key="3">
    <citation type="journal article" date="2023" name="Nat. Commun.">
        <title>Assessing and advancing the safety of CRISPR-Cas tools: from DNA to RNA editing.</title>
        <authorList>
            <person name="Tao J."/>
            <person name="Bauer D.E."/>
            <person name="Chiarle R."/>
        </authorList>
    </citation>
    <scope>REVIEW ON SAFETY OF GENOME EDITING TOOLS</scope>
</reference>
<proteinExistence type="evidence at protein level"/>
<accession>P0DW62</accession>
<gene>
    <name evidence="3" type="primary">cas12f1</name>
</gene>
<organism>
    <name type="scientific">Syntrophomonas palmitatica (strain DSM 18709 / JCM 14374 / NBRC 102128 / MPA)</name>
    <dbReference type="NCBI Taxonomy" id="1294023"/>
    <lineage>
        <taxon>Bacteria</taxon>
        <taxon>Bacillati</taxon>
        <taxon>Bacillota</taxon>
        <taxon>Clostridia</taxon>
        <taxon>Eubacteriales</taxon>
        <taxon>Syntrophomonadaceae</taxon>
        <taxon>Syntrophomonas</taxon>
    </lineage>
</organism>
<comment type="function">
    <text evidence="1 2 4">CRISPR (clustered regularly interspaced short palindromic repeat), is an adaptive immune system that provides protection against mobile genetic elements (viruses, transposable elements and conjugative plasmids). CRISPR clusters contain sequences complementary to antecedent mobile elements and target invading nucleic acids (Probable). CRISPR clusters are transcribed and processed into CRISPR RNA (crRNA), which requires a trans-encoded small RNA (tracrRNA), but not this protein (By similarity). Recognizes a short motif in the CRISPR repeat sequences (the 5' PAM or protospacer adjacent motif, TTC in this organism) to help distinguish self versus nonself, as targets within the CRISPR locus do not have PAMs. Has dsDNA endonuclease activity upon expression in E.coli of this protein, a mini CRISPR array and the probable tracrRNA. Plasmid cleavage is centered around positions 24 base pairs 3' of PAM. The mini system protects E.coli against transformation by foreign plasmids (PubMed:32246713).</text>
</comment>
<comment type="cofactor">
    <cofactor evidence="1">
        <name>Mg(2+)</name>
        <dbReference type="ChEBI" id="CHEBI:18420"/>
    </cofactor>
    <text evidence="1">Mg(2+) is required for dsDNA cleavage.</text>
</comment>
<comment type="cofactor">
    <cofactor evidence="1">
        <name>Zn(2+)</name>
        <dbReference type="ChEBI" id="CHEBI:29105"/>
    </cofactor>
</comment>
<comment type="subunit">
    <text evidence="1">An asymmetric homodimer. Guide RNA is probably required for dimerization.</text>
</comment>
<comment type="domain">
    <text evidence="1">Has an asymmetric bilobed structure, with a recognition (REC) lobe and nuclease (NUC) lobe; the sgRNA:target DNA is bound between the 2 lobes. The REC lobe (residues 1-312) is formed by the WED, ZF and REC domains, while the NUC lobe (residues 321-529) is formed by the RuvC and TNB domains. Has a split RuvC-like domain with the nuclease active sites.</text>
</comment>
<comment type="biotechnology">
    <text evidence="2">The small size of this enzyme and its ability to function in E.coli suggests it may be useful for genome editing.</text>
</comment>
<comment type="miscellaneous">
    <text evidence="3">Belongs to a group of putative class 2 CRISPR-Cas systems, type V-U3, which lack the proteins involved in adaptation.</text>
</comment>
<comment type="similarity">
    <text evidence="4">Belongs to the CRISPR-associated endonuclease Cas12f family.</text>
</comment>
<sequence>MGESVKAIKLKILDMFLDPECTKQDDNWRKDLSTMSRFCAEAGNMCLRDLYNYFSMPKEDRISSKDLYNAMYHKTKLLHPELPGKVANQIVNHAKDVWKRNAKLIYRNQISMPTYKITTAPIRLQNNIYKLIKNKNKYIIDVQLYSKEYSKDSGKGTHRYFLVAVRDSSTRMIFDRIMSKDHIDSSKSYTQGQLQIKKDHQGKWYCIIPYTFPTHETVLDPDKVMGVDLGVAKAVYWAFNSSYKRGCIDGGEIEHFRKMIRARRVSIQNQIKHSGDARKGHGRKRALKPIETLSEKEKNFRDTINHRYANRIVEAAIKQGCGTIQIENLEGIADTTGSKFLKNWPYYDLQTKIVNKAKEHGITVVAINPQYTSQRCSMCGYIEKTNRSSQAVFECKQCGYGSRTICINCRHVQVSGDVCEECGGIVKKENVNADYNAAKNISTPYIDQIIMEKCLELGIPYRSITCKECGHIQASGNTCEVCGSTNILKPKKIRKAK</sequence>
<feature type="chain" id="PRO_0000457912" description="CRISPR-associated endodeoxyribonuclease Cas12f1">
    <location>
        <begin position="1"/>
        <end position="497"/>
    </location>
</feature>
<feature type="region of interest" description="Recognition domain (REC)" evidence="1">
    <location>
        <begin position="29"/>
        <end position="122"/>
    </location>
</feature>
<feature type="region of interest" description="Wedge domain (WED)" evidence="1">
    <location>
        <begin position="123"/>
        <end position="214"/>
    </location>
</feature>
<feature type="region of interest" description="Linker" evidence="1">
    <location>
        <begin position="215"/>
        <end position="223"/>
    </location>
</feature>
<feature type="region of interest" description="RuvC-I" evidence="1">
    <location>
        <begin position="224"/>
        <end position="374"/>
    </location>
</feature>
<feature type="region of interest" description="Target nucleic acid-binding (TNB)" evidence="1">
    <location>
        <begin position="375"/>
        <end position="432"/>
    </location>
</feature>
<feature type="region of interest" description="RuvC-II" evidence="1">
    <location>
        <begin position="433"/>
        <end position="453"/>
    </location>
</feature>
<feature type="active site" evidence="1">
    <location>
        <position position="228"/>
    </location>
</feature>
<feature type="active site" evidence="1">
    <location>
        <position position="327"/>
    </location>
</feature>
<feature type="active site" evidence="1">
    <location>
        <position position="434"/>
    </location>
</feature>
<feature type="binding site" evidence="1">
    <location>
        <position position="376"/>
    </location>
    <ligand>
        <name>Zn(2+)</name>
        <dbReference type="ChEBI" id="CHEBI:29105"/>
    </ligand>
</feature>
<feature type="binding site" evidence="1">
    <location>
        <position position="379"/>
    </location>
    <ligand>
        <name>Zn(2+)</name>
        <dbReference type="ChEBI" id="CHEBI:29105"/>
    </ligand>
</feature>
<feature type="binding site" evidence="1">
    <location>
        <position position="395"/>
    </location>
    <ligand>
        <name>Zn(2+)</name>
        <dbReference type="ChEBI" id="CHEBI:29105"/>
    </ligand>
</feature>
<feature type="binding site" evidence="1">
    <location>
        <position position="398"/>
    </location>
    <ligand>
        <name>Zn(2+)</name>
        <dbReference type="ChEBI" id="CHEBI:29105"/>
    </ligand>
</feature>
<name>CS12F_SYNPJ</name>